<comment type="function">
    <text evidence="1 2 3">Nitronate monooxygenase that uses molecular oxygen to catalyze the oxidative denitrification of alkyl nitronates. The toxin propionate 3-nitronate (P3N) is the best substrate (and the presumed physiological substrate), but this enzyme is also active on other primary and secondary nitronates such as propyl-1-nitronate, ethylnitronate, pentyl-1-nitronate, butyl-1-nitronate and propyl-2-nitronate (PubMed:25002579). Is likely involved in the degradation of P3N, that allows P.aeruginosa PAO1 to grow on 3-nitropropionate/P3N as the sole nitrogen source (PubMed:20382807). Also functions in the detoxification of P3N, a metabolic poison produced by plants and fungi as a defense mechanism (PubMed:25384477). Cannot oxidize nitroalkanes such as 3-nitropropionate, nitroethane, 1-nitropropane, 1-nitrobutane, 1-nitropentane, or 2-nitropropane (PubMed:25002579).</text>
</comment>
<comment type="catalytic activity">
    <reaction evidence="2 8">
        <text>3 propionate 3-nitronate + 3 O2 + H2O = 3 3-oxopropanoate + 2 nitrate + nitrite + H2O2 + 3 H(+)</text>
        <dbReference type="Rhea" id="RHEA:57332"/>
        <dbReference type="ChEBI" id="CHEBI:15377"/>
        <dbReference type="ChEBI" id="CHEBI:15378"/>
        <dbReference type="ChEBI" id="CHEBI:15379"/>
        <dbReference type="ChEBI" id="CHEBI:16240"/>
        <dbReference type="ChEBI" id="CHEBI:16301"/>
        <dbReference type="ChEBI" id="CHEBI:17632"/>
        <dbReference type="ChEBI" id="CHEBI:33190"/>
        <dbReference type="ChEBI" id="CHEBI:136067"/>
    </reaction>
</comment>
<comment type="cofactor">
    <cofactor evidence="2">
        <name>FMN</name>
        <dbReference type="ChEBI" id="CHEBI:58210"/>
    </cofactor>
    <text evidence="2">Binds 1 FMN per subunit.</text>
</comment>
<comment type="biophysicochemical properties">
    <kinetics>
        <KM evidence="2">110 uM for propionate 3-nitronate (at pH 7.5 and 30 degrees Celsius)</KM>
        <KM evidence="2">5 mM for ethylnitronate (at pH 7.5 and 30 degrees Celsius)</KM>
        <KM evidence="2">6 mM for propyl-1-nitronate (at pH 7.5 and 30 degrees Celsius)</KM>
        <text evidence="2">kcat is 1300 sec(-1) with propionate 3-nitronate as substrate. kcat is 350 sec(-1) with ethylnitronate as substrate. kcat is 1120 sec(-1) with propyl-1-nitronate as substrate (at pH 7.5 and 30 degrees Celsius).</text>
    </kinetics>
</comment>
<comment type="induction">
    <text evidence="3">Expression is repressed by NmoR. Is cotranscribed with ddlA.</text>
</comment>
<comment type="disruption phenotype">
    <text evidence="3">Deletion of this gene results in an increased sensitivity of the cells to P3N.</text>
</comment>
<comment type="miscellaneous">
    <text evidence="10">At physiological pH, 3-nitropropionate (3-NPA) exists in equilibrium with its conjugate base, propionate-3-nitronate (P3N).</text>
</comment>
<comment type="miscellaneous">
    <text evidence="7">P3N is a potent irreversible inhibitor of the key enzyme succinate dehydrogenase in the Krebs cycle and electron transport chain. P3N has been shown to be a toxic metabolite to bacteria, plants, fungi, mammals or any organism that uses succinate dehydrogenase.</text>
</comment>
<comment type="similarity">
    <text evidence="9">Belongs to the nitronate monooxygenase family. NMO class I subfamily.</text>
</comment>
<evidence type="ECO:0000269" key="1">
    <source>
    </source>
</evidence>
<evidence type="ECO:0000269" key="2">
    <source>
    </source>
</evidence>
<evidence type="ECO:0000269" key="3">
    <source>
    </source>
</evidence>
<evidence type="ECO:0000303" key="4">
    <source>
    </source>
</evidence>
<evidence type="ECO:0000303" key="5">
    <source>
    </source>
</evidence>
<evidence type="ECO:0000303" key="6">
    <source>
    </source>
</evidence>
<evidence type="ECO:0000305" key="7"/>
<evidence type="ECO:0000305" key="8">
    <source>
    </source>
</evidence>
<evidence type="ECO:0000305" key="9">
    <source>
    </source>
</evidence>
<evidence type="ECO:0000305" key="10">
    <source>
    </source>
</evidence>
<evidence type="ECO:0000312" key="11">
    <source>
        <dbReference type="EMBL" id="AAG07589.1"/>
    </source>
</evidence>
<evidence type="ECO:0007744" key="12">
    <source>
        <dbReference type="PDB" id="4Q4K"/>
    </source>
</evidence>
<evidence type="ECO:0007829" key="13">
    <source>
        <dbReference type="PDB" id="4Q4K"/>
    </source>
</evidence>
<gene>
    <name evidence="6" type="primary">nmoA</name>
    <name evidence="11" type="ordered locus">PA4202</name>
</gene>
<accession>Q9HWH9</accession>
<protein>
    <recommendedName>
        <fullName evidence="5 6">Nitronate monooxygenase</fullName>
        <shortName evidence="5">NMO</shortName>
        <ecNumber evidence="2">1.13.12.-</ecNumber>
    </recommendedName>
    <alternativeName>
        <fullName evidence="4 6">Propionate 3-nitronate monooxygenase</fullName>
        <shortName evidence="4 6">P3N monooxygenase</shortName>
    </alternativeName>
</protein>
<sequence length="351" mass="36782">MTDRFTRLLGIQQPIIQAPMLGVSTPALAAAVSNAGGLGSIAITGSAAEKGRALIREVRGLTDKPFNVNLFCHRPGQADPARERAWLDYLKPLFAEFGAEPPVRLKNIYLSFLEDPTLLPMLLEERPAAVSFHFGAPPRDQVRALQAVGIRVLVCATTPEEAALVEAAGADAVVAQGIEAGGHRGVFEPERGDAAIGTLALVRLLAARGSLPVVAAGGIMDGRGIRAALELGASAVQMGTAFVLCPESSANAAYREALKGPRAARTALTVTMSGRSARGLPNRMFFDAAAPGVPPLPDYPFVYDATKALQTAALARGNHDFAAQWAGQGAALARELPAAELLRTLVEELRG</sequence>
<dbReference type="EC" id="1.13.12.-" evidence="2"/>
<dbReference type="EMBL" id="AE004091">
    <property type="protein sequence ID" value="AAG07589.1"/>
    <property type="molecule type" value="Genomic_DNA"/>
</dbReference>
<dbReference type="PIR" id="F83121">
    <property type="entry name" value="F83121"/>
</dbReference>
<dbReference type="RefSeq" id="NP_252891.1">
    <property type="nucleotide sequence ID" value="NC_002516.2"/>
</dbReference>
<dbReference type="RefSeq" id="WP_003114723.1">
    <property type="nucleotide sequence ID" value="NZ_QZGE01000013.1"/>
</dbReference>
<dbReference type="PDB" id="4Q4K">
    <property type="method" value="X-ray"/>
    <property type="resolution" value="1.44 A"/>
    <property type="chains" value="A/B=1-351"/>
</dbReference>
<dbReference type="PDBsum" id="4Q4K"/>
<dbReference type="SMR" id="Q9HWH9"/>
<dbReference type="STRING" id="208964.PA4202"/>
<dbReference type="PaxDb" id="208964-PA4202"/>
<dbReference type="GeneID" id="879034"/>
<dbReference type="KEGG" id="pae:PA4202"/>
<dbReference type="PATRIC" id="fig|208964.12.peg.4402"/>
<dbReference type="PseudoCAP" id="PA4202"/>
<dbReference type="HOGENOM" id="CLU_038732_5_1_6"/>
<dbReference type="InParanoid" id="Q9HWH9"/>
<dbReference type="OrthoDB" id="9778912at2"/>
<dbReference type="PhylomeDB" id="Q9HWH9"/>
<dbReference type="BioCyc" id="PAER208964:G1FZ6-4275-MONOMER"/>
<dbReference type="BRENDA" id="1.13.12.16">
    <property type="organism ID" value="5087"/>
</dbReference>
<dbReference type="EvolutionaryTrace" id="Q9HWH9"/>
<dbReference type="Proteomes" id="UP000002438">
    <property type="component" value="Chromosome"/>
</dbReference>
<dbReference type="GO" id="GO:0018580">
    <property type="term" value="F:nitronate monooxygenase activity"/>
    <property type="evidence" value="ECO:0000314"/>
    <property type="project" value="PseudoCAP"/>
</dbReference>
<dbReference type="GO" id="GO:0000166">
    <property type="term" value="F:nucleotide binding"/>
    <property type="evidence" value="ECO:0007669"/>
    <property type="project" value="UniProtKB-KW"/>
</dbReference>
<dbReference type="GO" id="GO:0009636">
    <property type="term" value="P:response to toxic substance"/>
    <property type="evidence" value="ECO:0007669"/>
    <property type="project" value="UniProtKB-KW"/>
</dbReference>
<dbReference type="CDD" id="cd04730">
    <property type="entry name" value="NPD_like"/>
    <property type="match status" value="1"/>
</dbReference>
<dbReference type="FunFam" id="3.20.20.70:FF:000154">
    <property type="entry name" value="Probable nitronate monooxygenase"/>
    <property type="match status" value="1"/>
</dbReference>
<dbReference type="Gene3D" id="3.20.20.70">
    <property type="entry name" value="Aldolase class I"/>
    <property type="match status" value="1"/>
</dbReference>
<dbReference type="InterPro" id="IPR013785">
    <property type="entry name" value="Aldolase_TIM"/>
</dbReference>
<dbReference type="InterPro" id="IPR004136">
    <property type="entry name" value="NMO"/>
</dbReference>
<dbReference type="PANTHER" id="PTHR42747">
    <property type="entry name" value="NITRONATE MONOOXYGENASE-RELATED"/>
    <property type="match status" value="1"/>
</dbReference>
<dbReference type="PANTHER" id="PTHR42747:SF3">
    <property type="entry name" value="NITRONATE MONOOXYGENASE-RELATED"/>
    <property type="match status" value="1"/>
</dbReference>
<dbReference type="Pfam" id="PF03060">
    <property type="entry name" value="NMO"/>
    <property type="match status" value="1"/>
</dbReference>
<dbReference type="SUPFAM" id="SSF51412">
    <property type="entry name" value="Inosine monophosphate dehydrogenase (IMPDH)"/>
    <property type="match status" value="1"/>
</dbReference>
<organism>
    <name type="scientific">Pseudomonas aeruginosa (strain ATCC 15692 / DSM 22644 / CIP 104116 / JCM 14847 / LMG 12228 / 1C / PRS 101 / PAO1)</name>
    <dbReference type="NCBI Taxonomy" id="208964"/>
    <lineage>
        <taxon>Bacteria</taxon>
        <taxon>Pseudomonadati</taxon>
        <taxon>Pseudomonadota</taxon>
        <taxon>Gammaproteobacteria</taxon>
        <taxon>Pseudomonadales</taxon>
        <taxon>Pseudomonadaceae</taxon>
        <taxon>Pseudomonas</taxon>
    </lineage>
</organism>
<keyword id="KW-0002">3D-structure</keyword>
<keyword id="KW-0216">Detoxification</keyword>
<keyword id="KW-0285">Flavoprotein</keyword>
<keyword id="KW-0288">FMN</keyword>
<keyword id="KW-0503">Monooxygenase</keyword>
<keyword id="KW-0547">Nucleotide-binding</keyword>
<keyword id="KW-0560">Oxidoreductase</keyword>
<keyword id="KW-1185">Reference proteome</keyword>
<proteinExistence type="evidence at protein level"/>
<feature type="chain" id="PRO_5004326837" description="Nitronate monooxygenase">
    <location>
        <begin position="1"/>
        <end position="351"/>
    </location>
</feature>
<feature type="binding site" evidence="2 12">
    <location>
        <position position="21"/>
    </location>
    <ligand>
        <name>FMN</name>
        <dbReference type="ChEBI" id="CHEBI:58210"/>
    </ligand>
</feature>
<feature type="binding site" evidence="2 12">
    <location>
        <position position="69"/>
    </location>
    <ligand>
        <name>FMN</name>
        <dbReference type="ChEBI" id="CHEBI:58210"/>
    </ligand>
</feature>
<feature type="binding site" evidence="2 12">
    <location>
        <position position="176"/>
    </location>
    <ligand>
        <name>FMN</name>
        <dbReference type="ChEBI" id="CHEBI:58210"/>
    </ligand>
</feature>
<feature type="binding site" evidence="2 12">
    <location>
        <position position="181"/>
    </location>
    <ligand>
        <name>FMN</name>
        <dbReference type="ChEBI" id="CHEBI:58210"/>
    </ligand>
</feature>
<feature type="binding site" evidence="2 12">
    <location>
        <position position="218"/>
    </location>
    <ligand>
        <name>FMN</name>
        <dbReference type="ChEBI" id="CHEBI:58210"/>
    </ligand>
</feature>
<feature type="binding site" evidence="2 12">
    <location>
        <begin position="237"/>
        <end position="240"/>
    </location>
    <ligand>
        <name>FMN</name>
        <dbReference type="ChEBI" id="CHEBI:58210"/>
    </ligand>
</feature>
<feature type="helix" evidence="13">
    <location>
        <begin position="4"/>
        <end position="9"/>
    </location>
</feature>
<feature type="strand" evidence="13">
    <location>
        <begin position="12"/>
        <end position="17"/>
    </location>
</feature>
<feature type="turn" evidence="13">
    <location>
        <begin position="21"/>
        <end position="23"/>
    </location>
</feature>
<feature type="helix" evidence="13">
    <location>
        <begin position="26"/>
        <end position="35"/>
    </location>
</feature>
<feature type="strand" evidence="13">
    <location>
        <begin position="37"/>
        <end position="42"/>
    </location>
</feature>
<feature type="helix" evidence="13">
    <location>
        <begin position="48"/>
        <end position="61"/>
    </location>
</feature>
<feature type="strand" evidence="13">
    <location>
        <begin position="66"/>
        <end position="71"/>
    </location>
</feature>
<feature type="helix" evidence="13">
    <location>
        <begin position="80"/>
        <end position="95"/>
    </location>
</feature>
<feature type="turn" evidence="13">
    <location>
        <begin position="96"/>
        <end position="98"/>
    </location>
</feature>
<feature type="turn" evidence="13">
    <location>
        <begin position="112"/>
        <end position="114"/>
    </location>
</feature>
<feature type="helix" evidence="13">
    <location>
        <begin position="118"/>
        <end position="125"/>
    </location>
</feature>
<feature type="strand" evidence="13">
    <location>
        <begin position="128"/>
        <end position="135"/>
    </location>
</feature>
<feature type="helix" evidence="13">
    <location>
        <begin position="139"/>
        <end position="147"/>
    </location>
</feature>
<feature type="strand" evidence="13">
    <location>
        <begin position="151"/>
        <end position="158"/>
    </location>
</feature>
<feature type="helix" evidence="13">
    <location>
        <begin position="159"/>
        <end position="167"/>
    </location>
</feature>
<feature type="strand" evidence="13">
    <location>
        <begin position="171"/>
        <end position="176"/>
    </location>
</feature>
<feature type="helix" evidence="13">
    <location>
        <begin position="189"/>
        <end position="191"/>
    </location>
</feature>
<feature type="helix" evidence="13">
    <location>
        <begin position="198"/>
        <end position="208"/>
    </location>
</feature>
<feature type="strand" evidence="13">
    <location>
        <begin position="213"/>
        <end position="218"/>
    </location>
</feature>
<feature type="helix" evidence="13">
    <location>
        <begin position="222"/>
        <end position="230"/>
    </location>
</feature>
<feature type="strand" evidence="13">
    <location>
        <begin position="234"/>
        <end position="239"/>
    </location>
</feature>
<feature type="helix" evidence="13">
    <location>
        <begin position="240"/>
        <end position="242"/>
    </location>
</feature>
<feature type="helix" evidence="13">
    <location>
        <begin position="252"/>
        <end position="259"/>
    </location>
</feature>
<feature type="helix" evidence="13">
    <location>
        <begin position="261"/>
        <end position="264"/>
    </location>
</feature>
<feature type="strand" evidence="13">
    <location>
        <begin position="267"/>
        <end position="270"/>
    </location>
</feature>
<feature type="turn" evidence="13">
    <location>
        <begin position="271"/>
        <end position="273"/>
    </location>
</feature>
<feature type="strand" evidence="13">
    <location>
        <begin position="277"/>
        <end position="279"/>
    </location>
</feature>
<feature type="helix" evidence="13">
    <location>
        <begin position="301"/>
        <end position="314"/>
    </location>
</feature>
<feature type="turn" evidence="13">
    <location>
        <begin position="315"/>
        <end position="317"/>
    </location>
</feature>
<feature type="helix" evidence="13">
    <location>
        <begin position="330"/>
        <end position="332"/>
    </location>
</feature>
<feature type="helix" evidence="13">
    <location>
        <begin position="338"/>
        <end position="350"/>
    </location>
</feature>
<name>NMO_PSEAE</name>
<reference key="1">
    <citation type="journal article" date="2000" name="Nature">
        <title>Complete genome sequence of Pseudomonas aeruginosa PAO1, an opportunistic pathogen.</title>
        <authorList>
            <person name="Stover C.K."/>
            <person name="Pham X.-Q.T."/>
            <person name="Erwin A.L."/>
            <person name="Mizoguchi S.D."/>
            <person name="Warrener P."/>
            <person name="Hickey M.J."/>
            <person name="Brinkman F.S.L."/>
            <person name="Hufnagle W.O."/>
            <person name="Kowalik D.J."/>
            <person name="Lagrou M."/>
            <person name="Garber R.L."/>
            <person name="Goltry L."/>
            <person name="Tolentino E."/>
            <person name="Westbrock-Wadman S."/>
            <person name="Yuan Y."/>
            <person name="Brody L.L."/>
            <person name="Coulter S.N."/>
            <person name="Folger K.R."/>
            <person name="Kas A."/>
            <person name="Larbig K."/>
            <person name="Lim R.M."/>
            <person name="Smith K.A."/>
            <person name="Spencer D.H."/>
            <person name="Wong G.K.-S."/>
            <person name="Wu Z."/>
            <person name="Paulsen I.T."/>
            <person name="Reizer J."/>
            <person name="Saier M.H. Jr."/>
            <person name="Hancock R.E.W."/>
            <person name="Lory S."/>
            <person name="Olson M.V."/>
        </authorList>
    </citation>
    <scope>NUCLEOTIDE SEQUENCE [LARGE SCALE GENOMIC DNA]</scope>
    <source>
        <strain>ATCC 15692 / DSM 22644 / CIP 104116 / JCM 14847 / LMG 12228 / 1C / PRS 101 / PAO1</strain>
    </source>
</reference>
<reference key="2">
    <citation type="journal article" date="2010" name="Appl. Environ. Microbiol.">
        <title>Growth of bacteria on 3-nitropropionic acid as a sole source of carbon, nitrogen, and energy.</title>
        <authorList>
            <person name="Nishino S.F."/>
            <person name="Shin K.A."/>
            <person name="Payne R.B."/>
            <person name="Spain J.C."/>
        </authorList>
    </citation>
    <scope>FUNCTION</scope>
    <source>
        <strain>ATCC 15692 / DSM 22644 / CIP 104116 / JCM 14847 / LMG 12228 / 1C / PRS 101 / PAO1</strain>
    </source>
</reference>
<reference key="3">
    <citation type="journal article" date="2015" name="J. Bacteriol.">
        <title>Pseudomonas aeruginosa LysR PA4203 regulator NmoR acts as a repressor of the PA4202 nmoA gene, encoding a nitronate monooxygenase.</title>
        <authorList>
            <person name="Vercammen K."/>
            <person name="Wei Q."/>
            <person name="Charlier D."/>
            <person name="Doetsch A."/>
            <person name="Hauessler S."/>
            <person name="Schulz S."/>
            <person name="Salvi F."/>
            <person name="Gadda G."/>
            <person name="Spain J."/>
            <person name="Rybtke M.L."/>
            <person name="Tolker-Nielsen T."/>
            <person name="Dingemans J."/>
            <person name="Ye L."/>
            <person name="Cornelis P."/>
        </authorList>
    </citation>
    <scope>FUNCTION</scope>
    <scope>DISRUPTION PHENOTYPE</scope>
    <scope>INDUCTION</scope>
    <source>
        <strain>ATCC 15692 / DSM 22644 / CIP 104116 / JCM 14847 / LMG 12228 / 1C / PRS 101 / PAO1</strain>
    </source>
</reference>
<reference evidence="12" key="4">
    <citation type="journal article" date="2014" name="J. Biol. Chem.">
        <title>The combined structural and kinetic characterization of a bacterial nitronate monooxygenase from Pseudomonas aeruginosa PAO1 establishes NMO class I and II.</title>
        <authorList>
            <person name="Salvi F."/>
            <person name="Agniswamy J."/>
            <person name="Yuan H."/>
            <person name="Vercammen K."/>
            <person name="Pelicaen R."/>
            <person name="Cornelis P."/>
            <person name="Spain J.C."/>
            <person name="Weber I.T."/>
            <person name="Gadda G."/>
        </authorList>
    </citation>
    <scope>X-RAY CRYSTALLOGRAPHY (1.44 ANGSTROMS) IN COMPLEX WITH FMN</scope>
    <scope>FUNCTION</scope>
    <scope>CATALYTIC ACTIVITY</scope>
    <scope>SUBSTRATE SPECIFICITY</scope>
    <scope>COFACTOR</scope>
    <scope>BIOPHYSICOCHEMICAL PROPERTIES</scope>
    <source>
        <strain>ATCC 15692 / DSM 22644 / CIP 104116 / JCM 14847 / LMG 12228 / 1C / PRS 101 / PAO1</strain>
    </source>
</reference>